<comment type="function">
    <text evidence="1">Antitoxin component of a type II toxin-antitoxin (TA) system. Antitoxin that counteracts the effect of the VapC4 toxin (By similarity).</text>
</comment>
<comment type="subunit">
    <text evidence="1">Interacts with cognate toxin VapC4.</text>
</comment>
<comment type="similarity">
    <text evidence="2">Belongs to the phD/YefM antitoxin family.</text>
</comment>
<evidence type="ECO:0000250" key="1"/>
<evidence type="ECO:0000305" key="2"/>
<reference key="1">
    <citation type="journal article" date="2002" name="J. Bacteriol.">
        <title>Whole-genome comparison of Mycobacterium tuberculosis clinical and laboratory strains.</title>
        <authorList>
            <person name="Fleischmann R.D."/>
            <person name="Alland D."/>
            <person name="Eisen J.A."/>
            <person name="Carpenter L."/>
            <person name="White O."/>
            <person name="Peterson J.D."/>
            <person name="DeBoy R.T."/>
            <person name="Dodson R.J."/>
            <person name="Gwinn M.L."/>
            <person name="Haft D.H."/>
            <person name="Hickey E.K."/>
            <person name="Kolonay J.F."/>
            <person name="Nelson W.C."/>
            <person name="Umayam L.A."/>
            <person name="Ermolaeva M.D."/>
            <person name="Salzberg S.L."/>
            <person name="Delcher A."/>
            <person name="Utterback T.R."/>
            <person name="Weidman J.F."/>
            <person name="Khouri H.M."/>
            <person name="Gill J."/>
            <person name="Mikula A."/>
            <person name="Bishai W."/>
            <person name="Jacobs W.R. Jr."/>
            <person name="Venter J.C."/>
            <person name="Fraser C.M."/>
        </authorList>
    </citation>
    <scope>NUCLEOTIDE SEQUENCE [LARGE SCALE GENOMIC DNA]</scope>
    <source>
        <strain>CDC 1551 / Oshkosh</strain>
    </source>
</reference>
<name>VAPB4_MYCTO</name>
<proteinExistence type="inferred from homology"/>
<sequence length="85" mass="9681">MSATIPARDLRNHTAEVLRRVAAGEEIEVLKDNRPVARIVPLKRRRQWLPAAEVIGELVRLGPDTTNLGEELRETLTQTTDDVRW</sequence>
<protein>
    <recommendedName>
        <fullName>Antitoxin VapB4</fullName>
    </recommendedName>
    <alternativeName>
        <fullName>VapB-mt4</fullName>
    </alternativeName>
</protein>
<gene>
    <name type="primary">vapB4</name>
    <name type="ordered locus">MT0626</name>
</gene>
<organism>
    <name type="scientific">Mycobacterium tuberculosis (strain CDC 1551 / Oshkosh)</name>
    <dbReference type="NCBI Taxonomy" id="83331"/>
    <lineage>
        <taxon>Bacteria</taxon>
        <taxon>Bacillati</taxon>
        <taxon>Actinomycetota</taxon>
        <taxon>Actinomycetes</taxon>
        <taxon>Mycobacteriales</taxon>
        <taxon>Mycobacteriaceae</taxon>
        <taxon>Mycobacterium</taxon>
        <taxon>Mycobacterium tuberculosis complex</taxon>
    </lineage>
</organism>
<feature type="chain" id="PRO_0000428615" description="Antitoxin VapB4">
    <location>
        <begin position="1"/>
        <end position="85"/>
    </location>
</feature>
<keyword id="KW-1185">Reference proteome</keyword>
<keyword id="KW-1277">Toxin-antitoxin system</keyword>
<dbReference type="EMBL" id="AE000516">
    <property type="protein sequence ID" value="AAK44850.1"/>
    <property type="molecule type" value="Genomic_DNA"/>
</dbReference>
<dbReference type="PIR" id="G70908">
    <property type="entry name" value="G70908"/>
</dbReference>
<dbReference type="RefSeq" id="WP_003403125.1">
    <property type="nucleotide sequence ID" value="NZ_KK341227.1"/>
</dbReference>
<dbReference type="SMR" id="P9WF20"/>
<dbReference type="GeneID" id="45424564"/>
<dbReference type="KEGG" id="mtc:MT0626"/>
<dbReference type="PATRIC" id="fig|83331.31.peg.658"/>
<dbReference type="HOGENOM" id="CLU_174702_2_0_11"/>
<dbReference type="Proteomes" id="UP000001020">
    <property type="component" value="Chromosome"/>
</dbReference>
<dbReference type="GO" id="GO:0097351">
    <property type="term" value="F:toxin sequestering activity"/>
    <property type="evidence" value="ECO:0007669"/>
    <property type="project" value="TreeGrafter"/>
</dbReference>
<dbReference type="FunFam" id="3.40.1620.10:FF:000002">
    <property type="entry name" value="Antitoxin"/>
    <property type="match status" value="1"/>
</dbReference>
<dbReference type="Gene3D" id="3.40.1620.10">
    <property type="entry name" value="YefM-like domain"/>
    <property type="match status" value="1"/>
</dbReference>
<dbReference type="InterPro" id="IPR006442">
    <property type="entry name" value="Antitoxin_Phd/YefM"/>
</dbReference>
<dbReference type="InterPro" id="IPR051416">
    <property type="entry name" value="phD-YefM_TA_antitoxins"/>
</dbReference>
<dbReference type="InterPro" id="IPR036165">
    <property type="entry name" value="YefM-like_sf"/>
</dbReference>
<dbReference type="NCBIfam" id="TIGR01552">
    <property type="entry name" value="phd_fam"/>
    <property type="match status" value="1"/>
</dbReference>
<dbReference type="PANTHER" id="PTHR35377:SF5">
    <property type="entry name" value="ANTITOXIN VAPB46"/>
    <property type="match status" value="1"/>
</dbReference>
<dbReference type="PANTHER" id="PTHR35377">
    <property type="entry name" value="ANTITOXIN VAPB49-RELATED-RELATED"/>
    <property type="match status" value="1"/>
</dbReference>
<dbReference type="Pfam" id="PF02604">
    <property type="entry name" value="PhdYeFM_antitox"/>
    <property type="match status" value="1"/>
</dbReference>
<dbReference type="SUPFAM" id="SSF143120">
    <property type="entry name" value="YefM-like"/>
    <property type="match status" value="1"/>
</dbReference>
<accession>P9WF20</accession>
<accession>L0T456</accession>
<accession>O07782</accession>
<accession>Q7D9K5</accession>